<dbReference type="EMBL" id="CR931997">
    <property type="protein sequence ID" value="CAI38017.1"/>
    <property type="molecule type" value="Genomic_DNA"/>
</dbReference>
<dbReference type="RefSeq" id="WP_011274173.1">
    <property type="nucleotide sequence ID" value="NC_007164.1"/>
</dbReference>
<dbReference type="SMR" id="Q4JT40"/>
<dbReference type="STRING" id="306537.jk1840"/>
<dbReference type="KEGG" id="cjk:jk1840"/>
<dbReference type="PATRIC" id="fig|306537.10.peg.1863"/>
<dbReference type="eggNOG" id="COG0480">
    <property type="taxonomic scope" value="Bacteria"/>
</dbReference>
<dbReference type="HOGENOM" id="CLU_002794_4_1_11"/>
<dbReference type="OrthoDB" id="9801472at2"/>
<dbReference type="Proteomes" id="UP000000545">
    <property type="component" value="Chromosome"/>
</dbReference>
<dbReference type="GO" id="GO:0005737">
    <property type="term" value="C:cytoplasm"/>
    <property type="evidence" value="ECO:0007669"/>
    <property type="project" value="UniProtKB-SubCell"/>
</dbReference>
<dbReference type="GO" id="GO:0005525">
    <property type="term" value="F:GTP binding"/>
    <property type="evidence" value="ECO:0007669"/>
    <property type="project" value="UniProtKB-UniRule"/>
</dbReference>
<dbReference type="GO" id="GO:0003924">
    <property type="term" value="F:GTPase activity"/>
    <property type="evidence" value="ECO:0007669"/>
    <property type="project" value="InterPro"/>
</dbReference>
<dbReference type="GO" id="GO:0003746">
    <property type="term" value="F:translation elongation factor activity"/>
    <property type="evidence" value="ECO:0007669"/>
    <property type="project" value="UniProtKB-UniRule"/>
</dbReference>
<dbReference type="GO" id="GO:0032790">
    <property type="term" value="P:ribosome disassembly"/>
    <property type="evidence" value="ECO:0007669"/>
    <property type="project" value="TreeGrafter"/>
</dbReference>
<dbReference type="CDD" id="cd01886">
    <property type="entry name" value="EF-G"/>
    <property type="match status" value="1"/>
</dbReference>
<dbReference type="CDD" id="cd16262">
    <property type="entry name" value="EFG_III"/>
    <property type="match status" value="1"/>
</dbReference>
<dbReference type="CDD" id="cd01434">
    <property type="entry name" value="EFG_mtEFG1_IV"/>
    <property type="match status" value="1"/>
</dbReference>
<dbReference type="CDD" id="cd03713">
    <property type="entry name" value="EFG_mtEFG_C"/>
    <property type="match status" value="1"/>
</dbReference>
<dbReference type="CDD" id="cd04088">
    <property type="entry name" value="EFG_mtEFG_II"/>
    <property type="match status" value="1"/>
</dbReference>
<dbReference type="FunFam" id="2.40.30.10:FF:000006">
    <property type="entry name" value="Elongation factor G"/>
    <property type="match status" value="1"/>
</dbReference>
<dbReference type="FunFam" id="3.30.230.10:FF:000003">
    <property type="entry name" value="Elongation factor G"/>
    <property type="match status" value="1"/>
</dbReference>
<dbReference type="FunFam" id="3.30.70.240:FF:000001">
    <property type="entry name" value="Elongation factor G"/>
    <property type="match status" value="1"/>
</dbReference>
<dbReference type="FunFam" id="3.30.70.870:FF:000001">
    <property type="entry name" value="Elongation factor G"/>
    <property type="match status" value="1"/>
</dbReference>
<dbReference type="FunFam" id="3.40.50.300:FF:000029">
    <property type="entry name" value="Elongation factor G"/>
    <property type="match status" value="1"/>
</dbReference>
<dbReference type="Gene3D" id="3.30.230.10">
    <property type="match status" value="1"/>
</dbReference>
<dbReference type="Gene3D" id="3.30.70.240">
    <property type="match status" value="1"/>
</dbReference>
<dbReference type="Gene3D" id="3.30.70.870">
    <property type="entry name" value="Elongation Factor G (Translational Gtpase), domain 3"/>
    <property type="match status" value="1"/>
</dbReference>
<dbReference type="Gene3D" id="3.40.50.300">
    <property type="entry name" value="P-loop containing nucleotide triphosphate hydrolases"/>
    <property type="match status" value="1"/>
</dbReference>
<dbReference type="Gene3D" id="2.40.30.10">
    <property type="entry name" value="Translation factors"/>
    <property type="match status" value="1"/>
</dbReference>
<dbReference type="HAMAP" id="MF_00054_B">
    <property type="entry name" value="EF_G_EF_2_B"/>
    <property type="match status" value="1"/>
</dbReference>
<dbReference type="InterPro" id="IPR041095">
    <property type="entry name" value="EFG_II"/>
</dbReference>
<dbReference type="InterPro" id="IPR009022">
    <property type="entry name" value="EFG_III"/>
</dbReference>
<dbReference type="InterPro" id="IPR035647">
    <property type="entry name" value="EFG_III/V"/>
</dbReference>
<dbReference type="InterPro" id="IPR047872">
    <property type="entry name" value="EFG_IV"/>
</dbReference>
<dbReference type="InterPro" id="IPR035649">
    <property type="entry name" value="EFG_V"/>
</dbReference>
<dbReference type="InterPro" id="IPR000640">
    <property type="entry name" value="EFG_V-like"/>
</dbReference>
<dbReference type="InterPro" id="IPR004161">
    <property type="entry name" value="EFTu-like_2"/>
</dbReference>
<dbReference type="InterPro" id="IPR031157">
    <property type="entry name" value="G_TR_CS"/>
</dbReference>
<dbReference type="InterPro" id="IPR027417">
    <property type="entry name" value="P-loop_NTPase"/>
</dbReference>
<dbReference type="InterPro" id="IPR020568">
    <property type="entry name" value="Ribosomal_Su5_D2-typ_SF"/>
</dbReference>
<dbReference type="InterPro" id="IPR014721">
    <property type="entry name" value="Ribsml_uS5_D2-typ_fold_subgr"/>
</dbReference>
<dbReference type="InterPro" id="IPR005225">
    <property type="entry name" value="Small_GTP-bd"/>
</dbReference>
<dbReference type="InterPro" id="IPR000795">
    <property type="entry name" value="T_Tr_GTP-bd_dom"/>
</dbReference>
<dbReference type="InterPro" id="IPR009000">
    <property type="entry name" value="Transl_B-barrel_sf"/>
</dbReference>
<dbReference type="InterPro" id="IPR004540">
    <property type="entry name" value="Transl_elong_EFG/EF2"/>
</dbReference>
<dbReference type="InterPro" id="IPR005517">
    <property type="entry name" value="Transl_elong_EFG/EF2_IV"/>
</dbReference>
<dbReference type="NCBIfam" id="TIGR00484">
    <property type="entry name" value="EF-G"/>
    <property type="match status" value="1"/>
</dbReference>
<dbReference type="NCBIfam" id="NF009381">
    <property type="entry name" value="PRK12740.1-5"/>
    <property type="match status" value="1"/>
</dbReference>
<dbReference type="NCBIfam" id="TIGR00231">
    <property type="entry name" value="small_GTP"/>
    <property type="match status" value="1"/>
</dbReference>
<dbReference type="PANTHER" id="PTHR43261:SF1">
    <property type="entry name" value="RIBOSOME-RELEASING FACTOR 2, MITOCHONDRIAL"/>
    <property type="match status" value="1"/>
</dbReference>
<dbReference type="PANTHER" id="PTHR43261">
    <property type="entry name" value="TRANSLATION ELONGATION FACTOR G-RELATED"/>
    <property type="match status" value="1"/>
</dbReference>
<dbReference type="Pfam" id="PF00679">
    <property type="entry name" value="EFG_C"/>
    <property type="match status" value="1"/>
</dbReference>
<dbReference type="Pfam" id="PF14492">
    <property type="entry name" value="EFG_III"/>
    <property type="match status" value="1"/>
</dbReference>
<dbReference type="Pfam" id="PF03764">
    <property type="entry name" value="EFG_IV"/>
    <property type="match status" value="1"/>
</dbReference>
<dbReference type="Pfam" id="PF00009">
    <property type="entry name" value="GTP_EFTU"/>
    <property type="match status" value="1"/>
</dbReference>
<dbReference type="Pfam" id="PF03144">
    <property type="entry name" value="GTP_EFTU_D2"/>
    <property type="match status" value="1"/>
</dbReference>
<dbReference type="PRINTS" id="PR00315">
    <property type="entry name" value="ELONGATNFCT"/>
</dbReference>
<dbReference type="SMART" id="SM00838">
    <property type="entry name" value="EFG_C"/>
    <property type="match status" value="1"/>
</dbReference>
<dbReference type="SMART" id="SM00889">
    <property type="entry name" value="EFG_IV"/>
    <property type="match status" value="1"/>
</dbReference>
<dbReference type="SUPFAM" id="SSF54980">
    <property type="entry name" value="EF-G C-terminal domain-like"/>
    <property type="match status" value="2"/>
</dbReference>
<dbReference type="SUPFAM" id="SSF52540">
    <property type="entry name" value="P-loop containing nucleoside triphosphate hydrolases"/>
    <property type="match status" value="1"/>
</dbReference>
<dbReference type="SUPFAM" id="SSF54211">
    <property type="entry name" value="Ribosomal protein S5 domain 2-like"/>
    <property type="match status" value="1"/>
</dbReference>
<dbReference type="SUPFAM" id="SSF50447">
    <property type="entry name" value="Translation proteins"/>
    <property type="match status" value="1"/>
</dbReference>
<dbReference type="PROSITE" id="PS00301">
    <property type="entry name" value="G_TR_1"/>
    <property type="match status" value="1"/>
</dbReference>
<dbReference type="PROSITE" id="PS51722">
    <property type="entry name" value="G_TR_2"/>
    <property type="match status" value="1"/>
</dbReference>
<organism>
    <name type="scientific">Corynebacterium jeikeium (strain K411)</name>
    <dbReference type="NCBI Taxonomy" id="306537"/>
    <lineage>
        <taxon>Bacteria</taxon>
        <taxon>Bacillati</taxon>
        <taxon>Actinomycetota</taxon>
        <taxon>Actinomycetes</taxon>
        <taxon>Mycobacteriales</taxon>
        <taxon>Corynebacteriaceae</taxon>
        <taxon>Corynebacterium</taxon>
    </lineage>
</organism>
<evidence type="ECO:0000255" key="1">
    <source>
        <dbReference type="HAMAP-Rule" id="MF_00054"/>
    </source>
</evidence>
<name>EFG_CORJK</name>
<sequence length="704" mass="77953">MALEALTDLKKVRNIGIMAHIDAGKTTTTERILFYTGINRKVGETHDGASTMDWMEQEKERGITITSAATTCFWKDNQINIIDTPGHVDFTIEVERSLRVLDGAVAVFDAKEGVEPQSEQVWRQATKYDVPRICFVNKMDKLGADFYYTVQTIVDRLGAKPLVMALPIGAEDDFDGIVDLLNMRAVTWRGKVEIGAEATYEEIPEDLKDKAEEYREKLVETVAESDEELMERYFAGEEITVDELKAQIRKLTISSEVYPVYCGSAYKNKGIQPMLDAVIDFLPNPMDVGSIKGHDAKDPEVEVLRKPSKDEPFSALAFKVAVHPFFGKLTYVRVYSGSVETGGQVMNSTKEKKERIGKLFQMHSNKEQPVDRASAGHIYAFIGLKDTTTGDTLCDAQDPVILESMDFPDPVIEVAIEPKTKSDQEKLGTAIQKLAEEDPTFTVKLDEETGQTVLGGMGELHLDVMVDRMKREFKVEANIGNPQVAYRETIRKPVEKLEYTHKKQTGGSGQFARVIIALEPYEPEEGSDQTYEFVNEVTGGRVPKEYIPSVDAGIQDAMQYGYLAGFPLVNIKATLLDGAYHEVDSSEMAFKLAGSQALKEAVAKAKPVLLEPLMAVEVITPEEYMGDVIGDINSRRGQVSSMDDRAGAKVVKAKVPLSEMFGYIGDLRSRTAGRANFSMIFDSYGEVPTNVASDIIAERTGGNA</sequence>
<proteinExistence type="inferred from homology"/>
<gene>
    <name evidence="1" type="primary">fusA</name>
    <name type="ordered locus">jk1840</name>
</gene>
<protein>
    <recommendedName>
        <fullName evidence="1">Elongation factor G</fullName>
        <shortName evidence="1">EF-G</shortName>
    </recommendedName>
</protein>
<comment type="function">
    <text evidence="1">Catalyzes the GTP-dependent ribosomal translocation step during translation elongation. During this step, the ribosome changes from the pre-translocational (PRE) to the post-translocational (POST) state as the newly formed A-site-bound peptidyl-tRNA and P-site-bound deacylated tRNA move to the P and E sites, respectively. Catalyzes the coordinated movement of the two tRNA molecules, the mRNA and conformational changes in the ribosome.</text>
</comment>
<comment type="subcellular location">
    <subcellularLocation>
        <location evidence="1">Cytoplasm</location>
    </subcellularLocation>
</comment>
<comment type="similarity">
    <text evidence="1">Belongs to the TRAFAC class translation factor GTPase superfamily. Classic translation factor GTPase family. EF-G/EF-2 subfamily.</text>
</comment>
<feature type="chain" id="PRO_0000225206" description="Elongation factor G">
    <location>
        <begin position="1"/>
        <end position="704"/>
    </location>
</feature>
<feature type="domain" description="tr-type G">
    <location>
        <begin position="10"/>
        <end position="286"/>
    </location>
</feature>
<feature type="binding site" evidence="1">
    <location>
        <begin position="19"/>
        <end position="26"/>
    </location>
    <ligand>
        <name>GTP</name>
        <dbReference type="ChEBI" id="CHEBI:37565"/>
    </ligand>
</feature>
<feature type="binding site" evidence="1">
    <location>
        <begin position="83"/>
        <end position="87"/>
    </location>
    <ligand>
        <name>GTP</name>
        <dbReference type="ChEBI" id="CHEBI:37565"/>
    </ligand>
</feature>
<feature type="binding site" evidence="1">
    <location>
        <begin position="137"/>
        <end position="140"/>
    </location>
    <ligand>
        <name>GTP</name>
        <dbReference type="ChEBI" id="CHEBI:37565"/>
    </ligand>
</feature>
<keyword id="KW-0963">Cytoplasm</keyword>
<keyword id="KW-0251">Elongation factor</keyword>
<keyword id="KW-0342">GTP-binding</keyword>
<keyword id="KW-0547">Nucleotide-binding</keyword>
<keyword id="KW-0648">Protein biosynthesis</keyword>
<keyword id="KW-1185">Reference proteome</keyword>
<reference key="1">
    <citation type="journal article" date="2005" name="J. Bacteriol.">
        <title>Complete genome sequence and analysis of the multiresistant nosocomial pathogen Corynebacterium jeikeium K411, a lipid-requiring bacterium of the human skin flora.</title>
        <authorList>
            <person name="Tauch A."/>
            <person name="Kaiser O."/>
            <person name="Hain T."/>
            <person name="Goesmann A."/>
            <person name="Weisshaar B."/>
            <person name="Albersmeier A."/>
            <person name="Bekel T."/>
            <person name="Bischoff N."/>
            <person name="Brune I."/>
            <person name="Chakraborty T."/>
            <person name="Kalinowski J."/>
            <person name="Meyer F."/>
            <person name="Rupp O."/>
            <person name="Schneiker S."/>
            <person name="Viehoever P."/>
            <person name="Puehler A."/>
        </authorList>
    </citation>
    <scope>NUCLEOTIDE SEQUENCE [LARGE SCALE GENOMIC DNA]</scope>
    <source>
        <strain>K411</strain>
    </source>
</reference>
<accession>Q4JT40</accession>